<protein>
    <recommendedName>
        <fullName evidence="1">Acetate kinase</fullName>
        <ecNumber evidence="1">2.7.2.1</ecNumber>
    </recommendedName>
    <alternativeName>
        <fullName evidence="1">Acetokinase</fullName>
    </alternativeName>
</protein>
<sequence>MKILVVNCGSSSLKYQLIDITSEEALAKGLVERIGIEGSILTQKVNGEKYIIEEPMKDHKKAIELVLKALVDKEHGVISDMSEIAAVGHRVVHGGEKYASSVLIDDEVMKALEDCVKLAPLHNPPNIIGINACRELMPKTPMVAVFDTAFHQTLPDYAYMYPLPYELYEQNGIRKYGFHGTSHRYVSSVASEMMEKDLKDLKVITCHLGNGASLCAVKEGKSVETSMGFTPLAGLAMGTRCGDIDPAILLFMERELKMSPDEVDTVINKKSGVLGISGVSSDFRDIEGAAEEGNKRAKLALDVYHYTVRQTIGAYTAVLNGVDAIVFTAGLGENSAASREEILNGLEYLGIKIDAEKNKQRGKQIEISTEDSKVKVFVIPTDEELMIARDTKEITVK</sequence>
<keyword id="KW-0067">ATP-binding</keyword>
<keyword id="KW-0963">Cytoplasm</keyword>
<keyword id="KW-0418">Kinase</keyword>
<keyword id="KW-0460">Magnesium</keyword>
<keyword id="KW-0479">Metal-binding</keyword>
<keyword id="KW-0547">Nucleotide-binding</keyword>
<keyword id="KW-0808">Transferase</keyword>
<name>ACKA_CLOBK</name>
<reference key="1">
    <citation type="journal article" date="2007" name="PLoS ONE">
        <title>Analysis of the neurotoxin complex genes in Clostridium botulinum A1-A4 and B1 strains: BoNT/A3, /Ba4 and /B1 clusters are located within plasmids.</title>
        <authorList>
            <person name="Smith T.J."/>
            <person name="Hill K.K."/>
            <person name="Foley B.T."/>
            <person name="Detter J.C."/>
            <person name="Munk A.C."/>
            <person name="Bruce D.C."/>
            <person name="Doggett N.A."/>
            <person name="Smith L.A."/>
            <person name="Marks J.D."/>
            <person name="Xie G."/>
            <person name="Brettin T.S."/>
        </authorList>
    </citation>
    <scope>NUCLEOTIDE SEQUENCE [LARGE SCALE GENOMIC DNA]</scope>
    <source>
        <strain>Okra / Type B1</strain>
    </source>
</reference>
<feature type="chain" id="PRO_1000089968" description="Acetate kinase">
    <location>
        <begin position="1"/>
        <end position="397"/>
    </location>
</feature>
<feature type="active site" description="Proton donor/acceptor" evidence="1">
    <location>
        <position position="147"/>
    </location>
</feature>
<feature type="binding site" evidence="1">
    <location>
        <position position="7"/>
    </location>
    <ligand>
        <name>Mg(2+)</name>
        <dbReference type="ChEBI" id="CHEBI:18420"/>
    </ligand>
</feature>
<feature type="binding site" evidence="1">
    <location>
        <position position="14"/>
    </location>
    <ligand>
        <name>ATP</name>
        <dbReference type="ChEBI" id="CHEBI:30616"/>
    </ligand>
</feature>
<feature type="binding site" evidence="1">
    <location>
        <position position="90"/>
    </location>
    <ligand>
        <name>substrate</name>
    </ligand>
</feature>
<feature type="binding site" evidence="1">
    <location>
        <begin position="207"/>
        <end position="211"/>
    </location>
    <ligand>
        <name>ATP</name>
        <dbReference type="ChEBI" id="CHEBI:30616"/>
    </ligand>
</feature>
<feature type="binding site" evidence="1">
    <location>
        <begin position="282"/>
        <end position="284"/>
    </location>
    <ligand>
        <name>ATP</name>
        <dbReference type="ChEBI" id="CHEBI:30616"/>
    </ligand>
</feature>
<feature type="binding site" evidence="1">
    <location>
        <begin position="330"/>
        <end position="334"/>
    </location>
    <ligand>
        <name>ATP</name>
        <dbReference type="ChEBI" id="CHEBI:30616"/>
    </ligand>
</feature>
<feature type="binding site" evidence="1">
    <location>
        <position position="383"/>
    </location>
    <ligand>
        <name>Mg(2+)</name>
        <dbReference type="ChEBI" id="CHEBI:18420"/>
    </ligand>
</feature>
<feature type="site" description="Transition state stabilizer" evidence="1">
    <location>
        <position position="179"/>
    </location>
</feature>
<feature type="site" description="Transition state stabilizer" evidence="1">
    <location>
        <position position="240"/>
    </location>
</feature>
<evidence type="ECO:0000255" key="1">
    <source>
        <dbReference type="HAMAP-Rule" id="MF_00020"/>
    </source>
</evidence>
<organism>
    <name type="scientific">Clostridium botulinum (strain Okra / Type B1)</name>
    <dbReference type="NCBI Taxonomy" id="498213"/>
    <lineage>
        <taxon>Bacteria</taxon>
        <taxon>Bacillati</taxon>
        <taxon>Bacillota</taxon>
        <taxon>Clostridia</taxon>
        <taxon>Eubacteriales</taxon>
        <taxon>Clostridiaceae</taxon>
        <taxon>Clostridium</taxon>
    </lineage>
</organism>
<comment type="function">
    <text evidence="1">Catalyzes the formation of acetyl phosphate from acetate and ATP. Can also catalyze the reverse reaction.</text>
</comment>
<comment type="catalytic activity">
    <reaction evidence="1">
        <text>acetate + ATP = acetyl phosphate + ADP</text>
        <dbReference type="Rhea" id="RHEA:11352"/>
        <dbReference type="ChEBI" id="CHEBI:22191"/>
        <dbReference type="ChEBI" id="CHEBI:30089"/>
        <dbReference type="ChEBI" id="CHEBI:30616"/>
        <dbReference type="ChEBI" id="CHEBI:456216"/>
        <dbReference type="EC" id="2.7.2.1"/>
    </reaction>
</comment>
<comment type="cofactor">
    <cofactor evidence="1">
        <name>Mg(2+)</name>
        <dbReference type="ChEBI" id="CHEBI:18420"/>
    </cofactor>
    <cofactor evidence="1">
        <name>Mn(2+)</name>
        <dbReference type="ChEBI" id="CHEBI:29035"/>
    </cofactor>
    <text evidence="1">Mg(2+). Can also accept Mn(2+).</text>
</comment>
<comment type="pathway">
    <text evidence="1">Metabolic intermediate biosynthesis; acetyl-CoA biosynthesis; acetyl-CoA from acetate: step 1/2.</text>
</comment>
<comment type="subunit">
    <text evidence="1">Homodimer.</text>
</comment>
<comment type="subcellular location">
    <subcellularLocation>
        <location evidence="1">Cytoplasm</location>
    </subcellularLocation>
</comment>
<comment type="similarity">
    <text evidence="1">Belongs to the acetokinase family.</text>
</comment>
<accession>B1II90</accession>
<gene>
    <name evidence="1" type="primary">ackA</name>
    <name type="ordered locus">CLD_2181</name>
</gene>
<dbReference type="EC" id="2.7.2.1" evidence="1"/>
<dbReference type="EMBL" id="CP000939">
    <property type="protein sequence ID" value="ACA45484.1"/>
    <property type="molecule type" value="Genomic_DNA"/>
</dbReference>
<dbReference type="RefSeq" id="WP_004451042.1">
    <property type="nucleotide sequence ID" value="NC_010516.1"/>
</dbReference>
<dbReference type="SMR" id="B1II90"/>
<dbReference type="KEGG" id="cbb:CLD_2181"/>
<dbReference type="HOGENOM" id="CLU_020352_0_1_9"/>
<dbReference type="UniPathway" id="UPA00340">
    <property type="reaction ID" value="UER00458"/>
</dbReference>
<dbReference type="Proteomes" id="UP000008541">
    <property type="component" value="Chromosome"/>
</dbReference>
<dbReference type="GO" id="GO:0005737">
    <property type="term" value="C:cytoplasm"/>
    <property type="evidence" value="ECO:0007669"/>
    <property type="project" value="UniProtKB-SubCell"/>
</dbReference>
<dbReference type="GO" id="GO:0008776">
    <property type="term" value="F:acetate kinase activity"/>
    <property type="evidence" value="ECO:0007669"/>
    <property type="project" value="UniProtKB-UniRule"/>
</dbReference>
<dbReference type="GO" id="GO:0005524">
    <property type="term" value="F:ATP binding"/>
    <property type="evidence" value="ECO:0007669"/>
    <property type="project" value="UniProtKB-KW"/>
</dbReference>
<dbReference type="GO" id="GO:0000287">
    <property type="term" value="F:magnesium ion binding"/>
    <property type="evidence" value="ECO:0007669"/>
    <property type="project" value="UniProtKB-UniRule"/>
</dbReference>
<dbReference type="GO" id="GO:0006083">
    <property type="term" value="P:acetate metabolic process"/>
    <property type="evidence" value="ECO:0007669"/>
    <property type="project" value="TreeGrafter"/>
</dbReference>
<dbReference type="GO" id="GO:0006085">
    <property type="term" value="P:acetyl-CoA biosynthetic process"/>
    <property type="evidence" value="ECO:0007669"/>
    <property type="project" value="UniProtKB-UniRule"/>
</dbReference>
<dbReference type="CDD" id="cd24010">
    <property type="entry name" value="ASKHA_NBD_AcK_PK"/>
    <property type="match status" value="1"/>
</dbReference>
<dbReference type="Gene3D" id="3.30.420.40">
    <property type="match status" value="2"/>
</dbReference>
<dbReference type="HAMAP" id="MF_00020">
    <property type="entry name" value="Acetate_kinase"/>
    <property type="match status" value="1"/>
</dbReference>
<dbReference type="InterPro" id="IPR004372">
    <property type="entry name" value="Ac/propionate_kinase"/>
</dbReference>
<dbReference type="InterPro" id="IPR000890">
    <property type="entry name" value="Aliphatic_acid_kin_short-chain"/>
</dbReference>
<dbReference type="InterPro" id="IPR023865">
    <property type="entry name" value="Aliphatic_acid_kinase_CS"/>
</dbReference>
<dbReference type="InterPro" id="IPR043129">
    <property type="entry name" value="ATPase_NBD"/>
</dbReference>
<dbReference type="NCBIfam" id="TIGR00016">
    <property type="entry name" value="ackA"/>
    <property type="match status" value="1"/>
</dbReference>
<dbReference type="PANTHER" id="PTHR21060">
    <property type="entry name" value="ACETATE KINASE"/>
    <property type="match status" value="1"/>
</dbReference>
<dbReference type="PANTHER" id="PTHR21060:SF15">
    <property type="entry name" value="ACETATE KINASE-RELATED"/>
    <property type="match status" value="1"/>
</dbReference>
<dbReference type="Pfam" id="PF00871">
    <property type="entry name" value="Acetate_kinase"/>
    <property type="match status" value="1"/>
</dbReference>
<dbReference type="PIRSF" id="PIRSF000722">
    <property type="entry name" value="Acetate_prop_kin"/>
    <property type="match status" value="1"/>
</dbReference>
<dbReference type="PRINTS" id="PR00471">
    <property type="entry name" value="ACETATEKNASE"/>
</dbReference>
<dbReference type="SUPFAM" id="SSF53067">
    <property type="entry name" value="Actin-like ATPase domain"/>
    <property type="match status" value="2"/>
</dbReference>
<dbReference type="PROSITE" id="PS01075">
    <property type="entry name" value="ACETATE_KINASE_1"/>
    <property type="match status" value="1"/>
</dbReference>
<dbReference type="PROSITE" id="PS01076">
    <property type="entry name" value="ACETATE_KINASE_2"/>
    <property type="match status" value="1"/>
</dbReference>
<proteinExistence type="inferred from homology"/>